<gene>
    <name evidence="1" type="primary">kdsB</name>
    <name type="ordered locus">Csal_1589</name>
</gene>
<keyword id="KW-0963">Cytoplasm</keyword>
<keyword id="KW-0448">Lipopolysaccharide biosynthesis</keyword>
<keyword id="KW-0548">Nucleotidyltransferase</keyword>
<keyword id="KW-1185">Reference proteome</keyword>
<keyword id="KW-0808">Transferase</keyword>
<organism>
    <name type="scientific">Chromohalobacter salexigens (strain ATCC BAA-138 / DSM 3043 / CIP 106854 / NCIMB 13768 / 1H11)</name>
    <dbReference type="NCBI Taxonomy" id="290398"/>
    <lineage>
        <taxon>Bacteria</taxon>
        <taxon>Pseudomonadati</taxon>
        <taxon>Pseudomonadota</taxon>
        <taxon>Gammaproteobacteria</taxon>
        <taxon>Oceanospirillales</taxon>
        <taxon>Halomonadaceae</taxon>
        <taxon>Chromohalobacter</taxon>
    </lineage>
</organism>
<dbReference type="EC" id="2.7.7.38" evidence="1"/>
<dbReference type="EMBL" id="CP000285">
    <property type="protein sequence ID" value="ABE58942.1"/>
    <property type="molecule type" value="Genomic_DNA"/>
</dbReference>
<dbReference type="RefSeq" id="WP_011506888.1">
    <property type="nucleotide sequence ID" value="NC_007963.1"/>
</dbReference>
<dbReference type="SMR" id="Q1QX66"/>
<dbReference type="STRING" id="290398.Csal_1589"/>
<dbReference type="GeneID" id="95334320"/>
<dbReference type="KEGG" id="csa:Csal_1589"/>
<dbReference type="eggNOG" id="COG1212">
    <property type="taxonomic scope" value="Bacteria"/>
</dbReference>
<dbReference type="HOGENOM" id="CLU_065038_1_0_6"/>
<dbReference type="OrthoDB" id="9815559at2"/>
<dbReference type="UniPathway" id="UPA00030"/>
<dbReference type="UniPathway" id="UPA00358">
    <property type="reaction ID" value="UER00476"/>
</dbReference>
<dbReference type="Proteomes" id="UP000000239">
    <property type="component" value="Chromosome"/>
</dbReference>
<dbReference type="GO" id="GO:0005829">
    <property type="term" value="C:cytosol"/>
    <property type="evidence" value="ECO:0007669"/>
    <property type="project" value="TreeGrafter"/>
</dbReference>
<dbReference type="GO" id="GO:0008690">
    <property type="term" value="F:3-deoxy-manno-octulosonate cytidylyltransferase activity"/>
    <property type="evidence" value="ECO:0007669"/>
    <property type="project" value="UniProtKB-UniRule"/>
</dbReference>
<dbReference type="GO" id="GO:0033468">
    <property type="term" value="P:CMP-keto-3-deoxy-D-manno-octulosonic acid biosynthetic process"/>
    <property type="evidence" value="ECO:0007669"/>
    <property type="project" value="UniProtKB-UniRule"/>
</dbReference>
<dbReference type="GO" id="GO:0009103">
    <property type="term" value="P:lipopolysaccharide biosynthetic process"/>
    <property type="evidence" value="ECO:0007669"/>
    <property type="project" value="UniProtKB-UniRule"/>
</dbReference>
<dbReference type="CDD" id="cd02517">
    <property type="entry name" value="CMP-KDO-Synthetase"/>
    <property type="match status" value="1"/>
</dbReference>
<dbReference type="FunFam" id="3.90.550.10:FF:000011">
    <property type="entry name" value="3-deoxy-manno-octulosonate cytidylyltransferase"/>
    <property type="match status" value="1"/>
</dbReference>
<dbReference type="Gene3D" id="3.90.550.10">
    <property type="entry name" value="Spore Coat Polysaccharide Biosynthesis Protein SpsA, Chain A"/>
    <property type="match status" value="1"/>
</dbReference>
<dbReference type="HAMAP" id="MF_00057">
    <property type="entry name" value="KdsB"/>
    <property type="match status" value="1"/>
</dbReference>
<dbReference type="InterPro" id="IPR003329">
    <property type="entry name" value="Cytidylyl_trans"/>
</dbReference>
<dbReference type="InterPro" id="IPR004528">
    <property type="entry name" value="KdsB"/>
</dbReference>
<dbReference type="InterPro" id="IPR029044">
    <property type="entry name" value="Nucleotide-diphossugar_trans"/>
</dbReference>
<dbReference type="NCBIfam" id="TIGR00466">
    <property type="entry name" value="kdsB"/>
    <property type="match status" value="1"/>
</dbReference>
<dbReference type="NCBIfam" id="NF003950">
    <property type="entry name" value="PRK05450.1-3"/>
    <property type="match status" value="1"/>
</dbReference>
<dbReference type="NCBIfam" id="NF003952">
    <property type="entry name" value="PRK05450.1-5"/>
    <property type="match status" value="1"/>
</dbReference>
<dbReference type="NCBIfam" id="NF009905">
    <property type="entry name" value="PRK13368.1"/>
    <property type="match status" value="1"/>
</dbReference>
<dbReference type="PANTHER" id="PTHR42866">
    <property type="entry name" value="3-DEOXY-MANNO-OCTULOSONATE CYTIDYLYLTRANSFERASE"/>
    <property type="match status" value="1"/>
</dbReference>
<dbReference type="PANTHER" id="PTHR42866:SF2">
    <property type="entry name" value="3-DEOXY-MANNO-OCTULOSONATE CYTIDYLYLTRANSFERASE, MITOCHONDRIAL"/>
    <property type="match status" value="1"/>
</dbReference>
<dbReference type="Pfam" id="PF02348">
    <property type="entry name" value="CTP_transf_3"/>
    <property type="match status" value="1"/>
</dbReference>
<dbReference type="SUPFAM" id="SSF53448">
    <property type="entry name" value="Nucleotide-diphospho-sugar transferases"/>
    <property type="match status" value="1"/>
</dbReference>
<sequence length="257" mass="28147">MSDVVVVIPARYGASRLPGKPLLDLHGEPMIARVWQRACKSDATRVVIATDDERIEAAMQPYGADVMLTAPDHPSGTDRLAEVAARLELDADTIVVNVQGDEPLLPPALIDQVVRRLADDTTASIATLAEPIGDVETLFNPNVVKVVRDLHGRALYFSRAPVPWDREHFATRPDCLATDAWLRHIGLYAYRAGFLAAYVDWLPSPLEQLEQLEQLRAMHHGHRIQVALAAEAHPAGVDTEADLARVRRLIAEGEGAA</sequence>
<protein>
    <recommendedName>
        <fullName evidence="1">3-deoxy-manno-octulosonate cytidylyltransferase</fullName>
        <ecNumber evidence="1">2.7.7.38</ecNumber>
    </recommendedName>
    <alternativeName>
        <fullName evidence="1">CMP-2-keto-3-deoxyoctulosonic acid synthase</fullName>
        <shortName evidence="1">CKS</shortName>
        <shortName evidence="1">CMP-KDO synthase</shortName>
    </alternativeName>
</protein>
<accession>Q1QX66</accession>
<reference key="1">
    <citation type="journal article" date="2011" name="Stand. Genomic Sci.">
        <title>Complete genome sequence of the halophilic and highly halotolerant Chromohalobacter salexigens type strain (1H11(T)).</title>
        <authorList>
            <person name="Copeland A."/>
            <person name="O'Connor K."/>
            <person name="Lucas S."/>
            <person name="Lapidus A."/>
            <person name="Berry K.W."/>
            <person name="Detter J.C."/>
            <person name="Del Rio T.G."/>
            <person name="Hammon N."/>
            <person name="Dalin E."/>
            <person name="Tice H."/>
            <person name="Pitluck S."/>
            <person name="Bruce D."/>
            <person name="Goodwin L."/>
            <person name="Han C."/>
            <person name="Tapia R."/>
            <person name="Saunders E."/>
            <person name="Schmutz J."/>
            <person name="Brettin T."/>
            <person name="Larimer F."/>
            <person name="Land M."/>
            <person name="Hauser L."/>
            <person name="Vargas C."/>
            <person name="Nieto J.J."/>
            <person name="Kyrpides N.C."/>
            <person name="Ivanova N."/>
            <person name="Goker M."/>
            <person name="Klenk H.P."/>
            <person name="Csonka L.N."/>
            <person name="Woyke T."/>
        </authorList>
    </citation>
    <scope>NUCLEOTIDE SEQUENCE [LARGE SCALE GENOMIC DNA]</scope>
    <source>
        <strain>ATCC BAA-138 / DSM 3043 / CIP 106854 / NCIMB 13768 / 1H11</strain>
    </source>
</reference>
<name>KDSB_CHRSD</name>
<feature type="chain" id="PRO_0000370049" description="3-deoxy-manno-octulosonate cytidylyltransferase">
    <location>
        <begin position="1"/>
        <end position="257"/>
    </location>
</feature>
<proteinExistence type="inferred from homology"/>
<evidence type="ECO:0000255" key="1">
    <source>
        <dbReference type="HAMAP-Rule" id="MF_00057"/>
    </source>
</evidence>
<comment type="function">
    <text evidence="1">Activates KDO (a required 8-carbon sugar) for incorporation into bacterial lipopolysaccharide in Gram-negative bacteria.</text>
</comment>
<comment type="catalytic activity">
    <reaction evidence="1">
        <text>3-deoxy-alpha-D-manno-oct-2-ulosonate + CTP = CMP-3-deoxy-beta-D-manno-octulosonate + diphosphate</text>
        <dbReference type="Rhea" id="RHEA:23448"/>
        <dbReference type="ChEBI" id="CHEBI:33019"/>
        <dbReference type="ChEBI" id="CHEBI:37563"/>
        <dbReference type="ChEBI" id="CHEBI:85986"/>
        <dbReference type="ChEBI" id="CHEBI:85987"/>
        <dbReference type="EC" id="2.7.7.38"/>
    </reaction>
</comment>
<comment type="pathway">
    <text evidence="1">Nucleotide-sugar biosynthesis; CMP-3-deoxy-D-manno-octulosonate biosynthesis; CMP-3-deoxy-D-manno-octulosonate from 3-deoxy-D-manno-octulosonate and CTP: step 1/1.</text>
</comment>
<comment type="pathway">
    <text evidence="1">Bacterial outer membrane biogenesis; lipopolysaccharide biosynthesis.</text>
</comment>
<comment type="subcellular location">
    <subcellularLocation>
        <location evidence="1">Cytoplasm</location>
    </subcellularLocation>
</comment>
<comment type="similarity">
    <text evidence="1">Belongs to the KdsB family.</text>
</comment>